<accession>P29632</accession>
<evidence type="ECO:0000250" key="1"/>
<evidence type="ECO:0000250" key="2">
    <source>
        <dbReference type="UniProtKB" id="P00157"/>
    </source>
</evidence>
<evidence type="ECO:0000255" key="3">
    <source>
        <dbReference type="PROSITE-ProRule" id="PRU00967"/>
    </source>
</evidence>
<evidence type="ECO:0000255" key="4">
    <source>
        <dbReference type="PROSITE-ProRule" id="PRU00968"/>
    </source>
</evidence>
<proteinExistence type="inferred from homology"/>
<protein>
    <recommendedName>
        <fullName>Cytochrome b</fullName>
    </recommendedName>
    <alternativeName>
        <fullName>Complex III subunit 3</fullName>
    </alternativeName>
    <alternativeName>
        <fullName>Complex III subunit III</fullName>
    </alternativeName>
    <alternativeName>
        <fullName>Cytochrome b-c1 complex subunit 3</fullName>
    </alternativeName>
    <alternativeName>
        <fullName>Ubiquinol-cytochrome-c reductase complex cytochrome b subunit</fullName>
    </alternativeName>
</protein>
<geneLocation type="mitochondrion"/>
<reference key="1">
    <citation type="journal article" date="1991" name="Proc. R. Soc. B">
        <title>Mitochondrial resolution of a deep branch in the genealogical tree for perching birds.</title>
        <authorList>
            <person name="Edwards S.V."/>
            <person name="Arctander P."/>
            <person name="Wilson A.C."/>
        </authorList>
    </citation>
    <scope>NUCLEOTIDE SEQUENCE [GENOMIC DNA]</scope>
</reference>
<reference key="2">
    <citation type="journal article" date="1996" name="Proc. R. Soc. B">
        <authorList>
            <person name="Edwards S.V."/>
            <person name="Arctander P."/>
        </authorList>
    </citation>
    <scope>ERRATUM OF PUBMED:1676522</scope>
</reference>
<organism>
    <name type="scientific">Amblyornis macgregoriae</name>
    <name type="common">Macgregor's bowerbird</name>
    <dbReference type="NCBI Taxonomy" id="9166"/>
    <lineage>
        <taxon>Eukaryota</taxon>
        <taxon>Metazoa</taxon>
        <taxon>Chordata</taxon>
        <taxon>Craniata</taxon>
        <taxon>Vertebrata</taxon>
        <taxon>Euteleostomi</taxon>
        <taxon>Archelosauria</taxon>
        <taxon>Archosauria</taxon>
        <taxon>Dinosauria</taxon>
        <taxon>Saurischia</taxon>
        <taxon>Theropoda</taxon>
        <taxon>Coelurosauria</taxon>
        <taxon>Aves</taxon>
        <taxon>Neognathae</taxon>
        <taxon>Neoaves</taxon>
        <taxon>Telluraves</taxon>
        <taxon>Australaves</taxon>
        <taxon>Passeriformes</taxon>
        <taxon>Ptilonorhynchidae</taxon>
        <taxon>Amblyornis</taxon>
    </lineage>
</organism>
<keyword id="KW-0249">Electron transport</keyword>
<keyword id="KW-0349">Heme</keyword>
<keyword id="KW-0408">Iron</keyword>
<keyword id="KW-0472">Membrane</keyword>
<keyword id="KW-0479">Metal-binding</keyword>
<keyword id="KW-0496">Mitochondrion</keyword>
<keyword id="KW-0999">Mitochondrion inner membrane</keyword>
<keyword id="KW-0679">Respiratory chain</keyword>
<keyword id="KW-0812">Transmembrane</keyword>
<keyword id="KW-1133">Transmembrane helix</keyword>
<keyword id="KW-0813">Transport</keyword>
<keyword id="KW-0830">Ubiquinone</keyword>
<comment type="function">
    <text evidence="2">Component of the ubiquinol-cytochrome c reductase complex (complex III or cytochrome b-c1 complex) that is part of the mitochondrial respiratory chain. The b-c1 complex mediates electron transfer from ubiquinol to cytochrome c. Contributes to the generation of a proton gradient across the mitochondrial membrane that is then used for ATP synthesis.</text>
</comment>
<comment type="cofactor">
    <cofactor evidence="2">
        <name>heme b</name>
        <dbReference type="ChEBI" id="CHEBI:60344"/>
    </cofactor>
    <text evidence="2">Binds 2 heme b groups non-covalently.</text>
</comment>
<comment type="subunit">
    <text evidence="2">The cytochrome bc1 complex contains 11 subunits: 3 respiratory subunits (MT-CYB, CYC1 and UQCRFS1), 2 core proteins (UQCRC1 and UQCRC2) and 6 low-molecular weight proteins (UQCRH/QCR6, UQCRB/QCR7, UQCRQ/QCR8, UQCR10/QCR9, UQCR11/QCR10 and a cleavage product of UQCRFS1). This cytochrome bc1 complex then forms a dimer.</text>
</comment>
<comment type="subcellular location">
    <subcellularLocation>
        <location evidence="2">Mitochondrion inner membrane</location>
        <topology evidence="2">Multi-pass membrane protein</topology>
    </subcellularLocation>
</comment>
<comment type="miscellaneous">
    <text evidence="1">Heme 1 (or BL or b562) is low-potential and absorbs at about 562 nm, and heme 2 (or BH or b566) is high-potential and absorbs at about 566 nm.</text>
</comment>
<comment type="similarity">
    <text evidence="3 4">Belongs to the cytochrome b family.</text>
</comment>
<comment type="caution">
    <text evidence="2">The full-length protein contains only eight transmembrane helices, not nine as predicted by bioinformatics tools.</text>
</comment>
<sequence>FGSLLGICLVTQIITGLLLATHYTADTNLAFASVAHTCRNVQFGWLIRNLHANGASFFFICIYLHIGRGIYYGSYLNKETWNTGVILLLTLMATAFVGYVLPWGQMSFWGATVITNLFSAIPYIGQTLVEWAWGGFSVDNPTLTRFFALHFLLPFVIAGITLVHLTFLHETGSNNPLGIPSDCDKIPFHPYYSMKDILGFALLFIALVAMALFSPNLLGDPENFTPANPLSTPPHIKPEWYFLFAYAILRSIPNKLGGVLALAASVLVLFLIPLLHTSKQRSMTFRPLSQILFWTLVANLLVLTWVGS</sequence>
<name>CYB_AMBMA</name>
<feature type="chain" id="PRO_0000060571" description="Cytochrome b">
    <location>
        <begin position="1" status="less than"/>
        <end position="308" status="greater than"/>
    </location>
</feature>
<feature type="transmembrane region" description="Helical" evidence="2">
    <location>
        <begin position="1"/>
        <end position="21"/>
    </location>
</feature>
<feature type="transmembrane region" description="Helical" evidence="2">
    <location>
        <begin position="45"/>
        <end position="66"/>
    </location>
</feature>
<feature type="transmembrane region" description="Helical" evidence="2">
    <location>
        <begin position="81"/>
        <end position="101"/>
    </location>
</feature>
<feature type="transmembrane region" description="Helical" evidence="2">
    <location>
        <begin position="146"/>
        <end position="166"/>
    </location>
</feature>
<feature type="transmembrane region" description="Helical" evidence="2">
    <location>
        <begin position="194"/>
        <end position="214"/>
    </location>
</feature>
<feature type="transmembrane region" description="Helical" evidence="2">
    <location>
        <begin position="256"/>
        <end position="276"/>
    </location>
</feature>
<feature type="transmembrane region" description="Helical" evidence="2">
    <location>
        <begin position="288"/>
        <end position="308"/>
    </location>
</feature>
<feature type="binding site" description="axial binding residue" evidence="2">
    <location>
        <position position="51"/>
    </location>
    <ligand>
        <name>heme b</name>
        <dbReference type="ChEBI" id="CHEBI:60344"/>
        <label>b562</label>
    </ligand>
    <ligandPart>
        <name>Fe</name>
        <dbReference type="ChEBI" id="CHEBI:18248"/>
    </ligandPart>
</feature>
<feature type="binding site" description="axial binding residue" evidence="2">
    <location>
        <position position="65"/>
    </location>
    <ligand>
        <name>heme b</name>
        <dbReference type="ChEBI" id="CHEBI:60344"/>
        <label>b566</label>
    </ligand>
    <ligandPart>
        <name>Fe</name>
        <dbReference type="ChEBI" id="CHEBI:18248"/>
    </ligandPart>
</feature>
<feature type="binding site" description="axial binding residue" evidence="2">
    <location>
        <position position="150"/>
    </location>
    <ligand>
        <name>heme b</name>
        <dbReference type="ChEBI" id="CHEBI:60344"/>
        <label>b562</label>
    </ligand>
    <ligandPart>
        <name>Fe</name>
        <dbReference type="ChEBI" id="CHEBI:18248"/>
    </ligandPart>
</feature>
<feature type="binding site" description="axial binding residue" evidence="2">
    <location>
        <position position="164"/>
    </location>
    <ligand>
        <name>heme b</name>
        <dbReference type="ChEBI" id="CHEBI:60344"/>
        <label>b566</label>
    </ligand>
    <ligandPart>
        <name>Fe</name>
        <dbReference type="ChEBI" id="CHEBI:18248"/>
    </ligandPart>
</feature>
<feature type="binding site" evidence="2">
    <location>
        <position position="169"/>
    </location>
    <ligand>
        <name>a ubiquinone</name>
        <dbReference type="ChEBI" id="CHEBI:16389"/>
    </ligand>
</feature>
<feature type="non-terminal residue">
    <location>
        <position position="1"/>
    </location>
</feature>
<feature type="non-terminal residue">
    <location>
        <position position="308"/>
    </location>
</feature>
<dbReference type="EMBL" id="X60940">
    <property type="protein sequence ID" value="CAA43275.1"/>
    <property type="molecule type" value="Genomic_DNA"/>
</dbReference>
<dbReference type="PIR" id="S22920">
    <property type="entry name" value="S22920"/>
</dbReference>
<dbReference type="SMR" id="P29632"/>
<dbReference type="GO" id="GO:0005743">
    <property type="term" value="C:mitochondrial inner membrane"/>
    <property type="evidence" value="ECO:0007669"/>
    <property type="project" value="UniProtKB-SubCell"/>
</dbReference>
<dbReference type="GO" id="GO:0046872">
    <property type="term" value="F:metal ion binding"/>
    <property type="evidence" value="ECO:0007669"/>
    <property type="project" value="UniProtKB-KW"/>
</dbReference>
<dbReference type="GO" id="GO:0008121">
    <property type="term" value="F:ubiquinol-cytochrome-c reductase activity"/>
    <property type="evidence" value="ECO:0007669"/>
    <property type="project" value="TreeGrafter"/>
</dbReference>
<dbReference type="GO" id="GO:0006122">
    <property type="term" value="P:mitochondrial electron transport, ubiquinol to cytochrome c"/>
    <property type="evidence" value="ECO:0007669"/>
    <property type="project" value="TreeGrafter"/>
</dbReference>
<dbReference type="CDD" id="cd00290">
    <property type="entry name" value="cytochrome_b_C"/>
    <property type="match status" value="1"/>
</dbReference>
<dbReference type="CDD" id="cd00284">
    <property type="entry name" value="Cytochrome_b_N"/>
    <property type="match status" value="1"/>
</dbReference>
<dbReference type="FunFam" id="1.20.810.10:FF:000002">
    <property type="entry name" value="Cytochrome b"/>
    <property type="match status" value="1"/>
</dbReference>
<dbReference type="Gene3D" id="1.20.810.10">
    <property type="entry name" value="Cytochrome Bc1 Complex, Chain C"/>
    <property type="match status" value="1"/>
</dbReference>
<dbReference type="InterPro" id="IPR005798">
    <property type="entry name" value="Cyt_b/b6_C"/>
</dbReference>
<dbReference type="InterPro" id="IPR036150">
    <property type="entry name" value="Cyt_b/b6_C_sf"/>
</dbReference>
<dbReference type="InterPro" id="IPR005797">
    <property type="entry name" value="Cyt_b/b6_N"/>
</dbReference>
<dbReference type="InterPro" id="IPR027387">
    <property type="entry name" value="Cytb/b6-like_sf"/>
</dbReference>
<dbReference type="InterPro" id="IPR048260">
    <property type="entry name" value="Cytochrome_b_C_euk/bac"/>
</dbReference>
<dbReference type="InterPro" id="IPR048259">
    <property type="entry name" value="Cytochrome_b_N_euk/bac"/>
</dbReference>
<dbReference type="InterPro" id="IPR016174">
    <property type="entry name" value="Di-haem_cyt_TM"/>
</dbReference>
<dbReference type="PANTHER" id="PTHR19271">
    <property type="entry name" value="CYTOCHROME B"/>
    <property type="match status" value="1"/>
</dbReference>
<dbReference type="PANTHER" id="PTHR19271:SF16">
    <property type="entry name" value="CYTOCHROME B"/>
    <property type="match status" value="1"/>
</dbReference>
<dbReference type="Pfam" id="PF00032">
    <property type="entry name" value="Cytochrom_B_C"/>
    <property type="match status" value="1"/>
</dbReference>
<dbReference type="Pfam" id="PF00033">
    <property type="entry name" value="Cytochrome_B"/>
    <property type="match status" value="1"/>
</dbReference>
<dbReference type="SUPFAM" id="SSF81648">
    <property type="entry name" value="a domain/subunit of cytochrome bc1 complex (Ubiquinol-cytochrome c reductase)"/>
    <property type="match status" value="1"/>
</dbReference>
<dbReference type="SUPFAM" id="SSF81342">
    <property type="entry name" value="Transmembrane di-heme cytochromes"/>
    <property type="match status" value="1"/>
</dbReference>
<dbReference type="PROSITE" id="PS51003">
    <property type="entry name" value="CYTB_CTER"/>
    <property type="match status" value="1"/>
</dbReference>
<dbReference type="PROSITE" id="PS51002">
    <property type="entry name" value="CYTB_NTER"/>
    <property type="match status" value="1"/>
</dbReference>
<gene>
    <name type="primary">MT-CYB</name>
    <name type="synonym">COB</name>
    <name type="synonym">CYTB</name>
    <name type="synonym">MTCYB</name>
</gene>